<proteinExistence type="evidence at protein level"/>
<comment type="function">
    <text evidence="4 5">Hydrolyzes extracellular Ap3A into AMP and ADP, and Ap4A into AMP and ATP. Ap3A and Ap4A are diadenosine polyphosphates thought to induce proliferation of vascular smooth muscle cells. Acts as a procoagulant, mediating platelet aggregation at the site of nascent thrombus via release of ADP from Ap3A and activation of ADP receptors.</text>
</comment>
<comment type="catalytic activity">
    <reaction evidence="4 5">
        <text>P(1),P(3)-bis(5'-adenosyl) triphosphate + H2O = AMP + ADP + 2 H(+)</text>
        <dbReference type="Rhea" id="RHEA:13893"/>
        <dbReference type="ChEBI" id="CHEBI:15377"/>
        <dbReference type="ChEBI" id="CHEBI:15378"/>
        <dbReference type="ChEBI" id="CHEBI:58529"/>
        <dbReference type="ChEBI" id="CHEBI:456215"/>
        <dbReference type="ChEBI" id="CHEBI:456216"/>
        <dbReference type="EC" id="3.6.1.29"/>
    </reaction>
</comment>
<comment type="cofactor">
    <cofactor evidence="5">
        <name>Zn(2+)</name>
        <dbReference type="ChEBI" id="CHEBI:29105"/>
    </cofactor>
    <text evidence="5">Binds 2 Zn(2+) ions per subunit.</text>
</comment>
<comment type="interaction">
    <interactant intactId="EBI-17442870">
        <id>Q9Y6X5</id>
    </interactant>
    <interactant intactId="EBI-1045825">
        <id>P55061</id>
        <label>TMBIM6</label>
    </interactant>
    <organismsDiffer>false</organismsDiffer>
    <experiments>3</experiments>
</comment>
<comment type="interaction">
    <interactant intactId="EBI-17442870">
        <id>Q9Y6X5</id>
    </interactant>
    <interactant intactId="EBI-348587">
        <id>Q9BVK8</id>
        <label>TMEM147</label>
    </interactant>
    <organismsDiffer>false</organismsDiffer>
    <experiments>3</experiments>
</comment>
<comment type="subcellular location">
    <subcellularLocation>
        <location evidence="4">Cell membrane</location>
        <topology evidence="4">Single-pass type I membrane protein</topology>
    </subcellularLocation>
</comment>
<comment type="tissue specificity">
    <text evidence="4">Expressed on the surface of vascular endothelia.</text>
</comment>
<comment type="similarity">
    <text evidence="6">Belongs to the nucleotide pyrophosphatase/phosphodiesterase family.</text>
</comment>
<organism>
    <name type="scientific">Homo sapiens</name>
    <name type="common">Human</name>
    <dbReference type="NCBI Taxonomy" id="9606"/>
    <lineage>
        <taxon>Eukaryota</taxon>
        <taxon>Metazoa</taxon>
        <taxon>Chordata</taxon>
        <taxon>Craniata</taxon>
        <taxon>Vertebrata</taxon>
        <taxon>Euteleostomi</taxon>
        <taxon>Mammalia</taxon>
        <taxon>Eutheria</taxon>
        <taxon>Euarchontoglires</taxon>
        <taxon>Primates</taxon>
        <taxon>Haplorrhini</taxon>
        <taxon>Catarrhini</taxon>
        <taxon>Hominidae</taxon>
        <taxon>Homo</taxon>
    </lineage>
</organism>
<dbReference type="EC" id="3.6.1.29"/>
<dbReference type="EMBL" id="AB020686">
    <property type="protein sequence ID" value="BAA74902.2"/>
    <property type="molecule type" value="mRNA"/>
</dbReference>
<dbReference type="EMBL" id="AK291276">
    <property type="protein sequence ID" value="BAF83965.1"/>
    <property type="molecule type" value="mRNA"/>
</dbReference>
<dbReference type="EMBL" id="AL035701">
    <property type="status" value="NOT_ANNOTATED_CDS"/>
    <property type="molecule type" value="Genomic_DNA"/>
</dbReference>
<dbReference type="EMBL" id="BC018054">
    <property type="protein sequence ID" value="AAH18054.1"/>
    <property type="molecule type" value="mRNA"/>
</dbReference>
<dbReference type="CCDS" id="CCDS34468.1"/>
<dbReference type="PIR" id="A59389">
    <property type="entry name" value="A59389"/>
</dbReference>
<dbReference type="RefSeq" id="NP_055751.1">
    <property type="nucleotide sequence ID" value="NM_014936.5"/>
</dbReference>
<dbReference type="PDB" id="4LQY">
    <property type="method" value="X-ray"/>
    <property type="resolution" value="1.54 A"/>
    <property type="chains" value="A=16-407"/>
</dbReference>
<dbReference type="PDB" id="4LR2">
    <property type="method" value="X-ray"/>
    <property type="resolution" value="1.50 A"/>
    <property type="chains" value="A=16-407"/>
</dbReference>
<dbReference type="PDBsum" id="4LQY"/>
<dbReference type="PDBsum" id="4LR2"/>
<dbReference type="SMR" id="Q9Y6X5"/>
<dbReference type="BioGRID" id="116542">
    <property type="interactions" value="28"/>
</dbReference>
<dbReference type="FunCoup" id="Q9Y6X5">
    <property type="interactions" value="672"/>
</dbReference>
<dbReference type="IntAct" id="Q9Y6X5">
    <property type="interactions" value="23"/>
</dbReference>
<dbReference type="STRING" id="9606.ENSP00000318066"/>
<dbReference type="GlyCosmos" id="Q9Y6X5">
    <property type="glycosylation" value="4 sites, No reported glycans"/>
</dbReference>
<dbReference type="GlyGen" id="Q9Y6X5">
    <property type="glycosylation" value="9 sites, 21 N-linked glycans (8 sites)"/>
</dbReference>
<dbReference type="iPTMnet" id="Q9Y6X5"/>
<dbReference type="PhosphoSitePlus" id="Q9Y6X5"/>
<dbReference type="SwissPalm" id="Q9Y6X5"/>
<dbReference type="BioMuta" id="ENPP4"/>
<dbReference type="DMDM" id="172045555"/>
<dbReference type="jPOST" id="Q9Y6X5"/>
<dbReference type="MassIVE" id="Q9Y6X5"/>
<dbReference type="PaxDb" id="9606-ENSP00000318066"/>
<dbReference type="PeptideAtlas" id="Q9Y6X5"/>
<dbReference type="ProteomicsDB" id="86816"/>
<dbReference type="Pumba" id="Q9Y6X5"/>
<dbReference type="Antibodypedia" id="2757">
    <property type="antibodies" value="117 antibodies from 21 providers"/>
</dbReference>
<dbReference type="DNASU" id="22875"/>
<dbReference type="Ensembl" id="ENST00000321037.5">
    <property type="protein sequence ID" value="ENSP00000318066.3"/>
    <property type="gene ID" value="ENSG00000001561.7"/>
</dbReference>
<dbReference type="GeneID" id="22875"/>
<dbReference type="KEGG" id="hsa:22875"/>
<dbReference type="MANE-Select" id="ENST00000321037.5">
    <property type="protein sequence ID" value="ENSP00000318066.3"/>
    <property type="RefSeq nucleotide sequence ID" value="NM_014936.5"/>
    <property type="RefSeq protein sequence ID" value="NP_055751.1"/>
</dbReference>
<dbReference type="UCSC" id="uc003oxy.4">
    <property type="organism name" value="human"/>
</dbReference>
<dbReference type="AGR" id="HGNC:3359"/>
<dbReference type="CTD" id="22875"/>
<dbReference type="DisGeNET" id="22875"/>
<dbReference type="GeneCards" id="ENPP4"/>
<dbReference type="HGNC" id="HGNC:3359">
    <property type="gene designation" value="ENPP4"/>
</dbReference>
<dbReference type="HPA" id="ENSG00000001561">
    <property type="expression patterns" value="Low tissue specificity"/>
</dbReference>
<dbReference type="MIM" id="617000">
    <property type="type" value="gene"/>
</dbReference>
<dbReference type="neXtProt" id="NX_Q9Y6X5"/>
<dbReference type="OpenTargets" id="ENSG00000001561"/>
<dbReference type="PharmGKB" id="PA27794"/>
<dbReference type="VEuPathDB" id="HostDB:ENSG00000001561"/>
<dbReference type="eggNOG" id="KOG2645">
    <property type="taxonomic scope" value="Eukaryota"/>
</dbReference>
<dbReference type="GeneTree" id="ENSGT00940000158831"/>
<dbReference type="HOGENOM" id="CLU_017594_1_2_1"/>
<dbReference type="InParanoid" id="Q9Y6X5"/>
<dbReference type="OMA" id="DVCIDHS"/>
<dbReference type="OrthoDB" id="415411at2759"/>
<dbReference type="PAN-GO" id="Q9Y6X5">
    <property type="GO annotations" value="0 GO annotations based on evolutionary models"/>
</dbReference>
<dbReference type="PhylomeDB" id="Q9Y6X5"/>
<dbReference type="TreeFam" id="TF330032"/>
<dbReference type="BRENDA" id="3.6.1.17">
    <property type="organism ID" value="2681"/>
</dbReference>
<dbReference type="PathwayCommons" id="Q9Y6X5"/>
<dbReference type="Reactome" id="R-HSA-6798695">
    <property type="pathway name" value="Neutrophil degranulation"/>
</dbReference>
<dbReference type="SignaLink" id="Q9Y6X5"/>
<dbReference type="BioGRID-ORCS" id="22875">
    <property type="hits" value="7 hits in 1148 CRISPR screens"/>
</dbReference>
<dbReference type="EvolutionaryTrace" id="Q9Y6X5"/>
<dbReference type="GenomeRNAi" id="22875"/>
<dbReference type="Pharos" id="Q9Y6X5">
    <property type="development level" value="Tbio"/>
</dbReference>
<dbReference type="PRO" id="PR:Q9Y6X5"/>
<dbReference type="Proteomes" id="UP000005640">
    <property type="component" value="Chromosome 6"/>
</dbReference>
<dbReference type="RNAct" id="Q9Y6X5">
    <property type="molecule type" value="protein"/>
</dbReference>
<dbReference type="Bgee" id="ENSG00000001561">
    <property type="expression patterns" value="Expressed in bronchial epithelial cell and 199 other cell types or tissues"/>
</dbReference>
<dbReference type="GO" id="GO:0070062">
    <property type="term" value="C:extracellular exosome"/>
    <property type="evidence" value="ECO:0007005"/>
    <property type="project" value="UniProtKB"/>
</dbReference>
<dbReference type="GO" id="GO:0101003">
    <property type="term" value="C:ficolin-1-rich granule membrane"/>
    <property type="evidence" value="ECO:0000304"/>
    <property type="project" value="Reactome"/>
</dbReference>
<dbReference type="GO" id="GO:0016020">
    <property type="term" value="C:membrane"/>
    <property type="evidence" value="ECO:0007005"/>
    <property type="project" value="UniProtKB"/>
</dbReference>
<dbReference type="GO" id="GO:0005886">
    <property type="term" value="C:plasma membrane"/>
    <property type="evidence" value="ECO:0000304"/>
    <property type="project" value="Reactome"/>
</dbReference>
<dbReference type="GO" id="GO:0047710">
    <property type="term" value="F:bis(5'-adenosyl)-triphosphatase activity"/>
    <property type="evidence" value="ECO:0000314"/>
    <property type="project" value="UniProtKB"/>
</dbReference>
<dbReference type="GO" id="GO:0046872">
    <property type="term" value="F:metal ion binding"/>
    <property type="evidence" value="ECO:0007669"/>
    <property type="project" value="UniProtKB-KW"/>
</dbReference>
<dbReference type="GO" id="GO:0007596">
    <property type="term" value="P:blood coagulation"/>
    <property type="evidence" value="ECO:0007669"/>
    <property type="project" value="UniProtKB-KW"/>
</dbReference>
<dbReference type="GO" id="GO:0030194">
    <property type="term" value="P:positive regulation of blood coagulation"/>
    <property type="evidence" value="ECO:0000314"/>
    <property type="project" value="UniProtKB"/>
</dbReference>
<dbReference type="GO" id="GO:0046130">
    <property type="term" value="P:purine ribonucleoside catabolic process"/>
    <property type="evidence" value="ECO:0000314"/>
    <property type="project" value="UniProtKB"/>
</dbReference>
<dbReference type="CDD" id="cd16018">
    <property type="entry name" value="Enpp"/>
    <property type="match status" value="1"/>
</dbReference>
<dbReference type="FunFam" id="3.40.720.10:FF:000035">
    <property type="entry name" value="Ectonucleotide pyrophosphatase/phosphodiesterase 4 (Putative)"/>
    <property type="match status" value="1"/>
</dbReference>
<dbReference type="FunFam" id="3.30.1360.180:FF:000004">
    <property type="entry name" value="Ectonucleotide pyrophosphatase/phosphodiesterase family member 4"/>
    <property type="match status" value="1"/>
</dbReference>
<dbReference type="Gene3D" id="3.30.1360.180">
    <property type="match status" value="1"/>
</dbReference>
<dbReference type="Gene3D" id="3.40.720.10">
    <property type="entry name" value="Alkaline Phosphatase, subunit A"/>
    <property type="match status" value="1"/>
</dbReference>
<dbReference type="InterPro" id="IPR017850">
    <property type="entry name" value="Alkaline_phosphatase_core_sf"/>
</dbReference>
<dbReference type="InterPro" id="IPR002591">
    <property type="entry name" value="Phosphodiest/P_Trfase"/>
</dbReference>
<dbReference type="PANTHER" id="PTHR10151:SF79">
    <property type="entry name" value="BIS(5'-ADENOSYL)-TRIPHOSPHATASE ENPP4"/>
    <property type="match status" value="1"/>
</dbReference>
<dbReference type="PANTHER" id="PTHR10151">
    <property type="entry name" value="ECTONUCLEOTIDE PYROPHOSPHATASE/PHOSPHODIESTERASE"/>
    <property type="match status" value="1"/>
</dbReference>
<dbReference type="Pfam" id="PF01663">
    <property type="entry name" value="Phosphodiest"/>
    <property type="match status" value="1"/>
</dbReference>
<dbReference type="SUPFAM" id="SSF53649">
    <property type="entry name" value="Alkaline phosphatase-like"/>
    <property type="match status" value="1"/>
</dbReference>
<protein>
    <recommendedName>
        <fullName>Bis(5'-adenosyl)-triphosphatase ENPP4</fullName>
        <ecNumber>3.6.1.29</ecNumber>
    </recommendedName>
    <alternativeName>
        <fullName>AP3A hydrolase</fullName>
        <shortName>AP3Aase</shortName>
    </alternativeName>
    <alternativeName>
        <fullName>Ectonucleotide pyrophosphatase/phosphodiesterase family member 4</fullName>
        <shortName>E-NPP 4</shortName>
        <shortName>NPP-4</shortName>
    </alternativeName>
</protein>
<accession>Q9Y6X5</accession>
<accession>A8K5G1</accession>
<accession>Q7L2N1</accession>
<feature type="signal peptide" evidence="2">
    <location>
        <begin position="1"/>
        <end position="15"/>
    </location>
</feature>
<feature type="chain" id="PRO_0000324795" description="Bis(5'-adenosyl)-triphosphatase ENPP4">
    <location>
        <begin position="16"/>
        <end position="453"/>
    </location>
</feature>
<feature type="topological domain" description="Extracellular" evidence="2">
    <location>
        <begin position="16"/>
        <end position="407"/>
    </location>
</feature>
<feature type="transmembrane region" description="Helical" evidence="2">
    <location>
        <begin position="408"/>
        <end position="428"/>
    </location>
</feature>
<feature type="topological domain" description="Cytoplasmic" evidence="2">
    <location>
        <begin position="429"/>
        <end position="453"/>
    </location>
</feature>
<feature type="active site" description="AMP-threonine intermediate" evidence="1">
    <location>
        <position position="70"/>
    </location>
</feature>
<feature type="binding site">
    <location>
        <position position="34"/>
    </location>
    <ligand>
        <name>Zn(2+)</name>
        <dbReference type="ChEBI" id="CHEBI:29105"/>
        <label>1</label>
        <note>catalytic</note>
    </ligand>
</feature>
<feature type="binding site">
    <location>
        <position position="70"/>
    </location>
    <ligand>
        <name>Zn(2+)</name>
        <dbReference type="ChEBI" id="CHEBI:29105"/>
        <label>1</label>
        <note>catalytic</note>
    </ligand>
</feature>
<feature type="binding site">
    <location>
        <position position="91"/>
    </location>
    <ligand>
        <name>substrate</name>
    </ligand>
</feature>
<feature type="binding site">
    <location>
        <position position="154"/>
    </location>
    <ligand>
        <name>substrate</name>
    </ligand>
</feature>
<feature type="binding site">
    <location>
        <position position="189"/>
    </location>
    <ligand>
        <name>substrate</name>
    </ligand>
</feature>
<feature type="binding site">
    <location>
        <position position="189"/>
    </location>
    <ligand>
        <name>Zn(2+)</name>
        <dbReference type="ChEBI" id="CHEBI:29105"/>
        <label>2</label>
        <note>catalytic</note>
    </ligand>
</feature>
<feature type="binding site">
    <location>
        <position position="193"/>
    </location>
    <ligand>
        <name>Zn(2+)</name>
        <dbReference type="ChEBI" id="CHEBI:29105"/>
        <label>2</label>
        <note>catalytic</note>
    </ligand>
</feature>
<feature type="binding site">
    <location>
        <position position="237"/>
    </location>
    <ligand>
        <name>Zn(2+)</name>
        <dbReference type="ChEBI" id="CHEBI:29105"/>
        <label>1</label>
        <note>catalytic</note>
    </ligand>
</feature>
<feature type="binding site">
    <location>
        <position position="238"/>
    </location>
    <ligand>
        <name>Zn(2+)</name>
        <dbReference type="ChEBI" id="CHEBI:29105"/>
        <label>1</label>
        <note>catalytic</note>
    </ligand>
</feature>
<feature type="binding site">
    <location>
        <position position="336"/>
    </location>
    <ligand>
        <name>Zn(2+)</name>
        <dbReference type="ChEBI" id="CHEBI:29105"/>
        <label>2</label>
        <note>catalytic</note>
    </ligand>
</feature>
<feature type="glycosylation site" description="N-linked (GlcNAc...) asparagine" evidence="5">
    <location>
        <position position="155"/>
    </location>
</feature>
<feature type="glycosylation site" description="N-linked (GlcNAc...) asparagine" evidence="5">
    <location>
        <position position="166"/>
    </location>
</feature>
<feature type="glycosylation site" description="N-linked (GlcNAc...) asparagine" evidence="2">
    <location>
        <position position="276"/>
    </location>
</feature>
<feature type="glycosylation site" description="N-linked (GlcNAc...) asparagine" evidence="5">
    <location>
        <position position="386"/>
    </location>
</feature>
<feature type="disulfide bond" evidence="5">
    <location>
        <begin position="254"/>
        <end position="287"/>
    </location>
</feature>
<feature type="disulfide bond" evidence="5">
    <location>
        <begin position="394"/>
        <end position="401"/>
    </location>
</feature>
<feature type="sequence variant" id="VAR_039884" description="In dbSNP:rs7451713." evidence="3">
    <original>H</original>
    <variation>Q</variation>
    <location>
        <position position="144"/>
    </location>
</feature>
<feature type="sequence variant" id="VAR_039885" description="In dbSNP:rs9381429.">
    <original>I</original>
    <variation>V</variation>
    <location>
        <position position="255"/>
    </location>
</feature>
<feature type="sequence variant" id="VAR_039886" description="In dbSNP:rs16874289.">
    <original>S</original>
    <variation>A</variation>
    <location>
        <position position="439"/>
    </location>
</feature>
<feature type="sequence conflict" description="In Ref. 3; BAF83965." evidence="6" ref="3">
    <original>D</original>
    <variation>G</variation>
    <location>
        <position position="39"/>
    </location>
</feature>
<feature type="strand" evidence="7">
    <location>
        <begin position="28"/>
        <end position="33"/>
    </location>
</feature>
<feature type="helix" evidence="7">
    <location>
        <begin position="40"/>
        <end position="43"/>
    </location>
</feature>
<feature type="helix" evidence="7">
    <location>
        <begin position="47"/>
        <end position="54"/>
    </location>
</feature>
<feature type="strand" evidence="7">
    <location>
        <begin position="56"/>
        <end position="63"/>
    </location>
</feature>
<feature type="helix" evidence="7">
    <location>
        <begin position="70"/>
        <end position="79"/>
    </location>
</feature>
<feature type="helix" evidence="7">
    <location>
        <begin position="83"/>
        <end position="86"/>
    </location>
</feature>
<feature type="strand" evidence="7">
    <location>
        <begin position="90"/>
        <end position="94"/>
    </location>
</feature>
<feature type="turn" evidence="7">
    <location>
        <begin position="96"/>
        <end position="98"/>
    </location>
</feature>
<feature type="strand" evidence="7">
    <location>
        <begin position="104"/>
        <end position="106"/>
    </location>
</feature>
<feature type="helix" evidence="7">
    <location>
        <begin position="110"/>
        <end position="112"/>
    </location>
</feature>
<feature type="turn" evidence="7">
    <location>
        <begin position="113"/>
        <end position="115"/>
    </location>
</feature>
<feature type="helix" evidence="7">
    <location>
        <begin position="119"/>
        <end position="124"/>
    </location>
</feature>
<feature type="strand" evidence="7">
    <location>
        <begin position="130"/>
        <end position="135"/>
    </location>
</feature>
<feature type="turn" evidence="7">
    <location>
        <begin position="137"/>
        <end position="140"/>
    </location>
</feature>
<feature type="helix" evidence="7">
    <location>
        <begin position="160"/>
        <end position="172"/>
    </location>
</feature>
<feature type="strand" evidence="7">
    <location>
        <begin position="178"/>
        <end position="185"/>
    </location>
</feature>
<feature type="helix" evidence="7">
    <location>
        <begin position="189"/>
        <end position="195"/>
    </location>
</feature>
<feature type="helix" evidence="7">
    <location>
        <begin position="200"/>
        <end position="223"/>
    </location>
</feature>
<feature type="turn" evidence="7">
    <location>
        <begin position="227"/>
        <end position="229"/>
    </location>
</feature>
<feature type="strand" evidence="7">
    <location>
        <begin position="231"/>
        <end position="235"/>
    </location>
</feature>
<feature type="strand" evidence="7">
    <location>
        <begin position="247"/>
        <end position="250"/>
    </location>
</feature>
<feature type="helix" evidence="7">
    <location>
        <begin position="251"/>
        <end position="253"/>
    </location>
</feature>
<feature type="helix" evidence="7">
    <location>
        <begin position="257"/>
        <end position="259"/>
    </location>
</feature>
<feature type="strand" evidence="7">
    <location>
        <begin position="260"/>
        <end position="264"/>
    </location>
</feature>
<feature type="strand" evidence="7">
    <location>
        <begin position="266"/>
        <end position="275"/>
    </location>
</feature>
<feature type="helix" evidence="7">
    <location>
        <begin position="277"/>
        <end position="284"/>
    </location>
</feature>
<feature type="strand" evidence="7">
    <location>
        <begin position="291"/>
        <end position="295"/>
    </location>
</feature>
<feature type="helix" evidence="7">
    <location>
        <begin position="296"/>
        <end position="298"/>
    </location>
</feature>
<feature type="helix" evidence="7">
    <location>
        <begin position="301"/>
        <end position="303"/>
    </location>
</feature>
<feature type="strand" evidence="7">
    <location>
        <begin position="313"/>
        <end position="318"/>
    </location>
</feature>
<feature type="strand" evidence="7">
    <location>
        <begin position="323"/>
        <end position="325"/>
    </location>
</feature>
<feature type="strand" evidence="7">
    <location>
        <begin position="333"/>
        <end position="335"/>
    </location>
</feature>
<feature type="helix" evidence="7">
    <location>
        <begin position="343"/>
        <end position="345"/>
    </location>
</feature>
<feature type="strand" evidence="7">
    <location>
        <begin position="349"/>
        <end position="353"/>
    </location>
</feature>
<feature type="strand" evidence="7">
    <location>
        <begin position="358"/>
        <end position="366"/>
    </location>
</feature>
<feature type="helix" evidence="7">
    <location>
        <begin position="367"/>
        <end position="369"/>
    </location>
</feature>
<feature type="helix" evidence="7">
    <location>
        <begin position="370"/>
        <end position="378"/>
    </location>
</feature>
<feature type="helix" evidence="7">
    <location>
        <begin position="389"/>
        <end position="395"/>
    </location>
</feature>
<evidence type="ECO:0000250" key="1"/>
<evidence type="ECO:0000255" key="2"/>
<evidence type="ECO:0000269" key="3">
    <source>
    </source>
</evidence>
<evidence type="ECO:0000269" key="4">
    <source>
    </source>
</evidence>
<evidence type="ECO:0000269" key="5">
    <source>
    </source>
</evidence>
<evidence type="ECO:0000305" key="6"/>
<evidence type="ECO:0007829" key="7">
    <source>
        <dbReference type="PDB" id="4LR2"/>
    </source>
</evidence>
<gene>
    <name type="primary">ENPP4</name>
    <name type="synonym">KIAA0879</name>
    <name type="synonym">NPP4</name>
</gene>
<reference key="1">
    <citation type="journal article" date="1998" name="DNA Res.">
        <title>Prediction of the coding sequences of unidentified human genes. XII. The complete sequences of 100 new cDNA clones from brain which code for large proteins in vitro.</title>
        <authorList>
            <person name="Nagase T."/>
            <person name="Ishikawa K."/>
            <person name="Suyama M."/>
            <person name="Kikuno R."/>
            <person name="Hirosawa M."/>
            <person name="Miyajima N."/>
            <person name="Tanaka A."/>
            <person name="Kotani H."/>
            <person name="Nomura N."/>
            <person name="Ohara O."/>
        </authorList>
    </citation>
    <scope>NUCLEOTIDE SEQUENCE [LARGE SCALE MRNA]</scope>
    <source>
        <tissue>Brain</tissue>
    </source>
</reference>
<reference key="2">
    <citation type="submission" date="2004-01" db="EMBL/GenBank/DDBJ databases">
        <authorList>
            <person name="Ohara O."/>
            <person name="Nagase T."/>
            <person name="Kikuno R."/>
        </authorList>
    </citation>
    <scope>SEQUENCE REVISION</scope>
</reference>
<reference key="3">
    <citation type="journal article" date="2004" name="Nat. Genet.">
        <title>Complete sequencing and characterization of 21,243 full-length human cDNAs.</title>
        <authorList>
            <person name="Ota T."/>
            <person name="Suzuki Y."/>
            <person name="Nishikawa T."/>
            <person name="Otsuki T."/>
            <person name="Sugiyama T."/>
            <person name="Irie R."/>
            <person name="Wakamatsu A."/>
            <person name="Hayashi K."/>
            <person name="Sato H."/>
            <person name="Nagai K."/>
            <person name="Kimura K."/>
            <person name="Makita H."/>
            <person name="Sekine M."/>
            <person name="Obayashi M."/>
            <person name="Nishi T."/>
            <person name="Shibahara T."/>
            <person name="Tanaka T."/>
            <person name="Ishii S."/>
            <person name="Yamamoto J."/>
            <person name="Saito K."/>
            <person name="Kawai Y."/>
            <person name="Isono Y."/>
            <person name="Nakamura Y."/>
            <person name="Nagahari K."/>
            <person name="Murakami K."/>
            <person name="Yasuda T."/>
            <person name="Iwayanagi T."/>
            <person name="Wagatsuma M."/>
            <person name="Shiratori A."/>
            <person name="Sudo H."/>
            <person name="Hosoiri T."/>
            <person name="Kaku Y."/>
            <person name="Kodaira H."/>
            <person name="Kondo H."/>
            <person name="Sugawara M."/>
            <person name="Takahashi M."/>
            <person name="Kanda K."/>
            <person name="Yokoi T."/>
            <person name="Furuya T."/>
            <person name="Kikkawa E."/>
            <person name="Omura Y."/>
            <person name="Abe K."/>
            <person name="Kamihara K."/>
            <person name="Katsuta N."/>
            <person name="Sato K."/>
            <person name="Tanikawa M."/>
            <person name="Yamazaki M."/>
            <person name="Ninomiya K."/>
            <person name="Ishibashi T."/>
            <person name="Yamashita H."/>
            <person name="Murakawa K."/>
            <person name="Fujimori K."/>
            <person name="Tanai H."/>
            <person name="Kimata M."/>
            <person name="Watanabe M."/>
            <person name="Hiraoka S."/>
            <person name="Chiba Y."/>
            <person name="Ishida S."/>
            <person name="Ono Y."/>
            <person name="Takiguchi S."/>
            <person name="Watanabe S."/>
            <person name="Yosida M."/>
            <person name="Hotuta T."/>
            <person name="Kusano J."/>
            <person name="Kanehori K."/>
            <person name="Takahashi-Fujii A."/>
            <person name="Hara H."/>
            <person name="Tanase T.-O."/>
            <person name="Nomura Y."/>
            <person name="Togiya S."/>
            <person name="Komai F."/>
            <person name="Hara R."/>
            <person name="Takeuchi K."/>
            <person name="Arita M."/>
            <person name="Imose N."/>
            <person name="Musashino K."/>
            <person name="Yuuki H."/>
            <person name="Oshima A."/>
            <person name="Sasaki N."/>
            <person name="Aotsuka S."/>
            <person name="Yoshikawa Y."/>
            <person name="Matsunawa H."/>
            <person name="Ichihara T."/>
            <person name="Shiohata N."/>
            <person name="Sano S."/>
            <person name="Moriya S."/>
            <person name="Momiyama H."/>
            <person name="Satoh N."/>
            <person name="Takami S."/>
            <person name="Terashima Y."/>
            <person name="Suzuki O."/>
            <person name="Nakagawa S."/>
            <person name="Senoh A."/>
            <person name="Mizoguchi H."/>
            <person name="Goto Y."/>
            <person name="Shimizu F."/>
            <person name="Wakebe H."/>
            <person name="Hishigaki H."/>
            <person name="Watanabe T."/>
            <person name="Sugiyama A."/>
            <person name="Takemoto M."/>
            <person name="Kawakami B."/>
            <person name="Yamazaki M."/>
            <person name="Watanabe K."/>
            <person name="Kumagai A."/>
            <person name="Itakura S."/>
            <person name="Fukuzumi Y."/>
            <person name="Fujimori Y."/>
            <person name="Komiyama M."/>
            <person name="Tashiro H."/>
            <person name="Tanigami A."/>
            <person name="Fujiwara T."/>
            <person name="Ono T."/>
            <person name="Yamada K."/>
            <person name="Fujii Y."/>
            <person name="Ozaki K."/>
            <person name="Hirao M."/>
            <person name="Ohmori Y."/>
            <person name="Kawabata A."/>
            <person name="Hikiji T."/>
            <person name="Kobatake N."/>
            <person name="Inagaki H."/>
            <person name="Ikema Y."/>
            <person name="Okamoto S."/>
            <person name="Okitani R."/>
            <person name="Kawakami T."/>
            <person name="Noguchi S."/>
            <person name="Itoh T."/>
            <person name="Shigeta K."/>
            <person name="Senba T."/>
            <person name="Matsumura K."/>
            <person name="Nakajima Y."/>
            <person name="Mizuno T."/>
            <person name="Morinaga M."/>
            <person name="Sasaki M."/>
            <person name="Togashi T."/>
            <person name="Oyama M."/>
            <person name="Hata H."/>
            <person name="Watanabe M."/>
            <person name="Komatsu T."/>
            <person name="Mizushima-Sugano J."/>
            <person name="Satoh T."/>
            <person name="Shirai Y."/>
            <person name="Takahashi Y."/>
            <person name="Nakagawa K."/>
            <person name="Okumura K."/>
            <person name="Nagase T."/>
            <person name="Nomura N."/>
            <person name="Kikuchi H."/>
            <person name="Masuho Y."/>
            <person name="Yamashita R."/>
            <person name="Nakai K."/>
            <person name="Yada T."/>
            <person name="Nakamura Y."/>
            <person name="Ohara O."/>
            <person name="Isogai T."/>
            <person name="Sugano S."/>
        </authorList>
    </citation>
    <scope>NUCLEOTIDE SEQUENCE [LARGE SCALE MRNA]</scope>
    <scope>VARIANT GLN-144</scope>
</reference>
<reference key="4">
    <citation type="journal article" date="2003" name="Nature">
        <title>The DNA sequence and analysis of human chromosome 6.</title>
        <authorList>
            <person name="Mungall A.J."/>
            <person name="Palmer S.A."/>
            <person name="Sims S.K."/>
            <person name="Edwards C.A."/>
            <person name="Ashurst J.L."/>
            <person name="Wilming L."/>
            <person name="Jones M.C."/>
            <person name="Horton R."/>
            <person name="Hunt S.E."/>
            <person name="Scott C.E."/>
            <person name="Gilbert J.G.R."/>
            <person name="Clamp M.E."/>
            <person name="Bethel G."/>
            <person name="Milne S."/>
            <person name="Ainscough R."/>
            <person name="Almeida J.P."/>
            <person name="Ambrose K.D."/>
            <person name="Andrews T.D."/>
            <person name="Ashwell R.I.S."/>
            <person name="Babbage A.K."/>
            <person name="Bagguley C.L."/>
            <person name="Bailey J."/>
            <person name="Banerjee R."/>
            <person name="Barker D.J."/>
            <person name="Barlow K.F."/>
            <person name="Bates K."/>
            <person name="Beare D.M."/>
            <person name="Beasley H."/>
            <person name="Beasley O."/>
            <person name="Bird C.P."/>
            <person name="Blakey S.E."/>
            <person name="Bray-Allen S."/>
            <person name="Brook J."/>
            <person name="Brown A.J."/>
            <person name="Brown J.Y."/>
            <person name="Burford D.C."/>
            <person name="Burrill W."/>
            <person name="Burton J."/>
            <person name="Carder C."/>
            <person name="Carter N.P."/>
            <person name="Chapman J.C."/>
            <person name="Clark S.Y."/>
            <person name="Clark G."/>
            <person name="Clee C.M."/>
            <person name="Clegg S."/>
            <person name="Cobley V."/>
            <person name="Collier R.E."/>
            <person name="Collins J.E."/>
            <person name="Colman L.K."/>
            <person name="Corby N.R."/>
            <person name="Coville G.J."/>
            <person name="Culley K.M."/>
            <person name="Dhami P."/>
            <person name="Davies J."/>
            <person name="Dunn M."/>
            <person name="Earthrowl M.E."/>
            <person name="Ellington A.E."/>
            <person name="Evans K.A."/>
            <person name="Faulkner L."/>
            <person name="Francis M.D."/>
            <person name="Frankish A."/>
            <person name="Frankland J."/>
            <person name="French L."/>
            <person name="Garner P."/>
            <person name="Garnett J."/>
            <person name="Ghori M.J."/>
            <person name="Gilby L.M."/>
            <person name="Gillson C.J."/>
            <person name="Glithero R.J."/>
            <person name="Grafham D.V."/>
            <person name="Grant M."/>
            <person name="Gribble S."/>
            <person name="Griffiths C."/>
            <person name="Griffiths M.N.D."/>
            <person name="Hall R."/>
            <person name="Halls K.S."/>
            <person name="Hammond S."/>
            <person name="Harley J.L."/>
            <person name="Hart E.A."/>
            <person name="Heath P.D."/>
            <person name="Heathcott R."/>
            <person name="Holmes S.J."/>
            <person name="Howden P.J."/>
            <person name="Howe K.L."/>
            <person name="Howell G.R."/>
            <person name="Huckle E."/>
            <person name="Humphray S.J."/>
            <person name="Humphries M.D."/>
            <person name="Hunt A.R."/>
            <person name="Johnson C.M."/>
            <person name="Joy A.A."/>
            <person name="Kay M."/>
            <person name="Keenan S.J."/>
            <person name="Kimberley A.M."/>
            <person name="King A."/>
            <person name="Laird G.K."/>
            <person name="Langford C."/>
            <person name="Lawlor S."/>
            <person name="Leongamornlert D.A."/>
            <person name="Leversha M."/>
            <person name="Lloyd C.R."/>
            <person name="Lloyd D.M."/>
            <person name="Loveland J.E."/>
            <person name="Lovell J."/>
            <person name="Martin S."/>
            <person name="Mashreghi-Mohammadi M."/>
            <person name="Maslen G.L."/>
            <person name="Matthews L."/>
            <person name="McCann O.T."/>
            <person name="McLaren S.J."/>
            <person name="McLay K."/>
            <person name="McMurray A."/>
            <person name="Moore M.J.F."/>
            <person name="Mullikin J.C."/>
            <person name="Niblett D."/>
            <person name="Nickerson T."/>
            <person name="Novik K.L."/>
            <person name="Oliver K."/>
            <person name="Overton-Larty E.K."/>
            <person name="Parker A."/>
            <person name="Patel R."/>
            <person name="Pearce A.V."/>
            <person name="Peck A.I."/>
            <person name="Phillimore B.J.C.T."/>
            <person name="Phillips S."/>
            <person name="Plumb R.W."/>
            <person name="Porter K.M."/>
            <person name="Ramsey Y."/>
            <person name="Ranby S.A."/>
            <person name="Rice C.M."/>
            <person name="Ross M.T."/>
            <person name="Searle S.M."/>
            <person name="Sehra H.K."/>
            <person name="Sheridan E."/>
            <person name="Skuce C.D."/>
            <person name="Smith S."/>
            <person name="Smith M."/>
            <person name="Spraggon L."/>
            <person name="Squares S.L."/>
            <person name="Steward C.A."/>
            <person name="Sycamore N."/>
            <person name="Tamlyn-Hall G."/>
            <person name="Tester J."/>
            <person name="Theaker A.J."/>
            <person name="Thomas D.W."/>
            <person name="Thorpe A."/>
            <person name="Tracey A."/>
            <person name="Tromans A."/>
            <person name="Tubby B."/>
            <person name="Wall M."/>
            <person name="Wallis J.M."/>
            <person name="West A.P."/>
            <person name="White S.S."/>
            <person name="Whitehead S.L."/>
            <person name="Whittaker H."/>
            <person name="Wild A."/>
            <person name="Willey D.J."/>
            <person name="Wilmer T.E."/>
            <person name="Wood J.M."/>
            <person name="Wray P.W."/>
            <person name="Wyatt J.C."/>
            <person name="Young L."/>
            <person name="Younger R.M."/>
            <person name="Bentley D.R."/>
            <person name="Coulson A."/>
            <person name="Durbin R.M."/>
            <person name="Hubbard T."/>
            <person name="Sulston J.E."/>
            <person name="Dunham I."/>
            <person name="Rogers J."/>
            <person name="Beck S."/>
        </authorList>
    </citation>
    <scope>NUCLEOTIDE SEQUENCE [LARGE SCALE GENOMIC DNA]</scope>
</reference>
<reference key="5">
    <citation type="journal article" date="2004" name="Genome Res.">
        <title>The status, quality, and expansion of the NIH full-length cDNA project: the Mammalian Gene Collection (MGC).</title>
        <authorList>
            <consortium name="The MGC Project Team"/>
        </authorList>
    </citation>
    <scope>NUCLEOTIDE SEQUENCE [LARGE SCALE MRNA]</scope>
    <source>
        <tissue>Brain</tissue>
    </source>
</reference>
<reference key="6">
    <citation type="journal article" date="2001" name="J. Biol. Chem.">
        <title>Structural and catalytic similarities between nucleotide pyrophosphatases/phosphodiesterases and alkaline phosphatases.</title>
        <authorList>
            <person name="Gijsbers R."/>
            <person name="Ceulemans H."/>
            <person name="Stalmans W."/>
            <person name="Bollen M."/>
        </authorList>
    </citation>
    <scope>IDENTIFICATION</scope>
</reference>
<reference key="7">
    <citation type="journal article" date="2012" name="Blood">
        <title>NPP4 is a procoagulant enzyme on the surface of vascular endothelium.</title>
        <authorList>
            <person name="Albright R.A."/>
            <person name="Chang W.C."/>
            <person name="Robert D."/>
            <person name="Ornstein D.L."/>
            <person name="Cao W."/>
            <person name="Liu L."/>
            <person name="Redick M.E."/>
            <person name="Young J.I."/>
            <person name="De La Cruz E.M."/>
            <person name="Braddock D.T."/>
        </authorList>
    </citation>
    <scope>FUNCTION</scope>
    <scope>CATALYTIC ACTIVITY</scope>
    <scope>SUBCELLULAR LOCATION</scope>
    <scope>TISSUE SPECIFICITY</scope>
</reference>
<reference key="8">
    <citation type="journal article" date="2014" name="J. Biol. Chem.">
        <title>The molecular basis of purinergic signal metabolism by ecto-nucleotide pyrophosphatase/phosphodiesterases 4 and 1 and implications in stroke.</title>
        <authorList>
            <person name="Albright R.A."/>
            <person name="Ornstein D.L."/>
            <person name="Cao W."/>
            <person name="Chang W.C."/>
            <person name="Robert D."/>
            <person name="Tehan M."/>
            <person name="Hoyer D."/>
            <person name="Liu L."/>
            <person name="Stabach P."/>
            <person name="Yang G."/>
            <person name="De La Cruz E.M."/>
            <person name="Braddock D.T."/>
        </authorList>
    </citation>
    <scope>X-RAY CRYSTALLOGRAPHY (1.50 ANGSTROMS) OF 16-407 IN COMPLEXES WITH ZINC AND AMP</scope>
    <scope>FUNCTION</scope>
    <scope>CATALYTIC ACTIVITY</scope>
    <scope>DISULFIDE BOND</scope>
    <scope>GLYCOSYLATION AT ASN-155; ASN-166 AND ASN-386</scope>
    <scope>ACTIVE SITE</scope>
    <scope>COFACTOR</scope>
</reference>
<sequence length="453" mass="51641">MKLLVILLFSGLITGFRSDSSSSLPPKLLLVSFDGFRADYLKNYEFPHLQNFIKEGVLVEHVKNVFITKTFPNHYSIVTGLYEESHGIVANSMYDAVTKKHFSDSNDKDPFWWNEAVPIWVTNQLQENRSSAAAMWPGTDVPIHDTISSYFMNYNSSVSFEERLNNITMWLNNSNPPVTFATLYWEEPDASGHKYGPEDKENMSRVLKKIDDLIGDLVQRLKMLGLWENLNVIITSDHGMTQCSQDRLINLDSCIDHSYYTLIDLSPVAAILPKINRTEVYNKLKNCSPHMNVYLKEDIPNRFYYQHNDRIQPIILVADEGWTIVLNESSQKLGDHGYDNSLPSMHPFLAAHGPAFHKGYKHSTINIVDIYPMMCHILGLKPHPNNGTFGHTKCLLVDQWCINLPEAIAIVIGSLLVLTMLTCLIIIMQNRLSVPRPFSRLQLQEDDDDPLIG</sequence>
<keyword id="KW-0002">3D-structure</keyword>
<keyword id="KW-0094">Blood coagulation</keyword>
<keyword id="KW-1003">Cell membrane</keyword>
<keyword id="KW-1015">Disulfide bond</keyword>
<keyword id="KW-0325">Glycoprotein</keyword>
<keyword id="KW-0356">Hemostasis</keyword>
<keyword id="KW-0378">Hydrolase</keyword>
<keyword id="KW-0472">Membrane</keyword>
<keyword id="KW-0479">Metal-binding</keyword>
<keyword id="KW-1267">Proteomics identification</keyword>
<keyword id="KW-1185">Reference proteome</keyword>
<keyword id="KW-0732">Signal</keyword>
<keyword id="KW-0812">Transmembrane</keyword>
<keyword id="KW-1133">Transmembrane helix</keyword>
<keyword id="KW-0862">Zinc</keyword>
<name>ENPP4_HUMAN</name>